<keyword id="KW-0488">Methylation</keyword>
<keyword id="KW-1185">Reference proteome</keyword>
<keyword id="KW-0687">Ribonucleoprotein</keyword>
<keyword id="KW-0689">Ribosomal protein</keyword>
<keyword id="KW-0694">RNA-binding</keyword>
<keyword id="KW-0699">rRNA-binding</keyword>
<comment type="function">
    <text evidence="1">Forms part of the ribosomal stalk which helps the ribosome interact with GTP-bound translation factors.</text>
</comment>
<comment type="subunit">
    <text evidence="1">Part of the ribosomal stalk of the 50S ribosomal subunit. Interacts with L10 and the large rRNA to form the base of the stalk. L10 forms an elongated spine to which L12 dimers bind in a sequential fashion forming a multimeric L10(L12)X complex.</text>
</comment>
<comment type="PTM">
    <text evidence="1">One or more lysine residues are methylated.</text>
</comment>
<comment type="similarity">
    <text evidence="1">Belongs to the universal ribosomal protein uL11 family.</text>
</comment>
<dbReference type="EMBL" id="CP000655">
    <property type="protein sequence ID" value="ABP33264.1"/>
    <property type="molecule type" value="Genomic_DNA"/>
</dbReference>
<dbReference type="RefSeq" id="WP_011901890.1">
    <property type="nucleotide sequence ID" value="NC_009379.1"/>
</dbReference>
<dbReference type="SMR" id="A4SUV0"/>
<dbReference type="GeneID" id="83597037"/>
<dbReference type="KEGG" id="pnu:Pnuc_0042"/>
<dbReference type="eggNOG" id="COG0080">
    <property type="taxonomic scope" value="Bacteria"/>
</dbReference>
<dbReference type="HOGENOM" id="CLU_074237_2_0_4"/>
<dbReference type="Proteomes" id="UP000000231">
    <property type="component" value="Chromosome"/>
</dbReference>
<dbReference type="GO" id="GO:0022625">
    <property type="term" value="C:cytosolic large ribosomal subunit"/>
    <property type="evidence" value="ECO:0007669"/>
    <property type="project" value="TreeGrafter"/>
</dbReference>
<dbReference type="GO" id="GO:0070180">
    <property type="term" value="F:large ribosomal subunit rRNA binding"/>
    <property type="evidence" value="ECO:0007669"/>
    <property type="project" value="UniProtKB-UniRule"/>
</dbReference>
<dbReference type="GO" id="GO:0003735">
    <property type="term" value="F:structural constituent of ribosome"/>
    <property type="evidence" value="ECO:0007669"/>
    <property type="project" value="InterPro"/>
</dbReference>
<dbReference type="GO" id="GO:0006412">
    <property type="term" value="P:translation"/>
    <property type="evidence" value="ECO:0007669"/>
    <property type="project" value="UniProtKB-UniRule"/>
</dbReference>
<dbReference type="CDD" id="cd00349">
    <property type="entry name" value="Ribosomal_L11"/>
    <property type="match status" value="1"/>
</dbReference>
<dbReference type="FunFam" id="1.10.10.250:FF:000001">
    <property type="entry name" value="50S ribosomal protein L11"/>
    <property type="match status" value="1"/>
</dbReference>
<dbReference type="FunFam" id="3.30.1550.10:FF:000001">
    <property type="entry name" value="50S ribosomal protein L11"/>
    <property type="match status" value="1"/>
</dbReference>
<dbReference type="Gene3D" id="1.10.10.250">
    <property type="entry name" value="Ribosomal protein L11, C-terminal domain"/>
    <property type="match status" value="1"/>
</dbReference>
<dbReference type="Gene3D" id="3.30.1550.10">
    <property type="entry name" value="Ribosomal protein L11/L12, N-terminal domain"/>
    <property type="match status" value="1"/>
</dbReference>
<dbReference type="HAMAP" id="MF_00736">
    <property type="entry name" value="Ribosomal_uL11"/>
    <property type="match status" value="1"/>
</dbReference>
<dbReference type="InterPro" id="IPR000911">
    <property type="entry name" value="Ribosomal_uL11"/>
</dbReference>
<dbReference type="InterPro" id="IPR006519">
    <property type="entry name" value="Ribosomal_uL11_bac-typ"/>
</dbReference>
<dbReference type="InterPro" id="IPR020783">
    <property type="entry name" value="Ribosomal_uL11_C"/>
</dbReference>
<dbReference type="InterPro" id="IPR036769">
    <property type="entry name" value="Ribosomal_uL11_C_sf"/>
</dbReference>
<dbReference type="InterPro" id="IPR020785">
    <property type="entry name" value="Ribosomal_uL11_CS"/>
</dbReference>
<dbReference type="InterPro" id="IPR020784">
    <property type="entry name" value="Ribosomal_uL11_N"/>
</dbReference>
<dbReference type="InterPro" id="IPR036796">
    <property type="entry name" value="Ribosomal_uL11_N_sf"/>
</dbReference>
<dbReference type="NCBIfam" id="TIGR01632">
    <property type="entry name" value="L11_bact"/>
    <property type="match status" value="1"/>
</dbReference>
<dbReference type="PANTHER" id="PTHR11661">
    <property type="entry name" value="60S RIBOSOMAL PROTEIN L12"/>
    <property type="match status" value="1"/>
</dbReference>
<dbReference type="PANTHER" id="PTHR11661:SF1">
    <property type="entry name" value="LARGE RIBOSOMAL SUBUNIT PROTEIN UL11M"/>
    <property type="match status" value="1"/>
</dbReference>
<dbReference type="Pfam" id="PF00298">
    <property type="entry name" value="Ribosomal_L11"/>
    <property type="match status" value="1"/>
</dbReference>
<dbReference type="Pfam" id="PF03946">
    <property type="entry name" value="Ribosomal_L11_N"/>
    <property type="match status" value="1"/>
</dbReference>
<dbReference type="SMART" id="SM00649">
    <property type="entry name" value="RL11"/>
    <property type="match status" value="1"/>
</dbReference>
<dbReference type="SUPFAM" id="SSF54747">
    <property type="entry name" value="Ribosomal L11/L12e N-terminal domain"/>
    <property type="match status" value="1"/>
</dbReference>
<dbReference type="SUPFAM" id="SSF46906">
    <property type="entry name" value="Ribosomal protein L11, C-terminal domain"/>
    <property type="match status" value="1"/>
</dbReference>
<dbReference type="PROSITE" id="PS00359">
    <property type="entry name" value="RIBOSOMAL_L11"/>
    <property type="match status" value="1"/>
</dbReference>
<feature type="chain" id="PRO_1000083395" description="Large ribosomal subunit protein uL11">
    <location>
        <begin position="1"/>
        <end position="143"/>
    </location>
</feature>
<accession>A4SUV0</accession>
<protein>
    <recommendedName>
        <fullName evidence="1">Large ribosomal subunit protein uL11</fullName>
    </recommendedName>
    <alternativeName>
        <fullName evidence="2">50S ribosomal protein L11</fullName>
    </alternativeName>
</protein>
<organism>
    <name type="scientific">Polynucleobacter asymbioticus (strain DSM 18221 / CIP 109841 / QLW-P1DMWA-1)</name>
    <name type="common">Polynucleobacter necessarius subsp. asymbioticus</name>
    <dbReference type="NCBI Taxonomy" id="312153"/>
    <lineage>
        <taxon>Bacteria</taxon>
        <taxon>Pseudomonadati</taxon>
        <taxon>Pseudomonadota</taxon>
        <taxon>Betaproteobacteria</taxon>
        <taxon>Burkholderiales</taxon>
        <taxon>Burkholderiaceae</taxon>
        <taxon>Polynucleobacter</taxon>
    </lineage>
</organism>
<name>RL11_POLAQ</name>
<sequence length="143" mass="15115">MAKKIIGFIKLQIPAGKANPSPPVGPALGQRGLNIMEFCKAFNAQTQSMEPGLPIPVVITAFADKSFTFIMKTPPATIMIKKAAKIEKGSPRPHTDKVGKITRAQAEEIAKAKMPDLTAADMDAAVRTIAGSARSMGITVEGL</sequence>
<proteinExistence type="inferred from homology"/>
<gene>
    <name evidence="1" type="primary">rplK</name>
    <name type="ordered locus">Pnuc_0042</name>
</gene>
<evidence type="ECO:0000255" key="1">
    <source>
        <dbReference type="HAMAP-Rule" id="MF_00736"/>
    </source>
</evidence>
<evidence type="ECO:0000305" key="2"/>
<reference key="1">
    <citation type="journal article" date="2012" name="Stand. Genomic Sci.">
        <title>Complete genome sequence of Polynucleobacter necessarius subsp. asymbioticus type strain (QLW-P1DMWA-1(T)).</title>
        <authorList>
            <person name="Meincke L."/>
            <person name="Copeland A."/>
            <person name="Lapidus A."/>
            <person name="Lucas S."/>
            <person name="Berry K.W."/>
            <person name="Del Rio T.G."/>
            <person name="Hammon N."/>
            <person name="Dalin E."/>
            <person name="Tice H."/>
            <person name="Pitluck S."/>
            <person name="Richardson P."/>
            <person name="Bruce D."/>
            <person name="Goodwin L."/>
            <person name="Han C."/>
            <person name="Tapia R."/>
            <person name="Detter J.C."/>
            <person name="Schmutz J."/>
            <person name="Brettin T."/>
            <person name="Larimer F."/>
            <person name="Land M."/>
            <person name="Hauser L."/>
            <person name="Kyrpides N.C."/>
            <person name="Ivanova N."/>
            <person name="Goker M."/>
            <person name="Woyke T."/>
            <person name="Wu Q.L."/>
            <person name="Pockl M."/>
            <person name="Hahn M.W."/>
            <person name="Klenk H.P."/>
        </authorList>
    </citation>
    <scope>NUCLEOTIDE SEQUENCE [LARGE SCALE GENOMIC DNA]</scope>
    <source>
        <strain>DSM 18221 / CIP 109841 / QLW-P1DMWA-1</strain>
    </source>
</reference>